<dbReference type="EC" id="2.1.1.186" evidence="1"/>
<dbReference type="EMBL" id="AE017282">
    <property type="protein sequence ID" value="AAU90735.1"/>
    <property type="molecule type" value="Genomic_DNA"/>
</dbReference>
<dbReference type="RefSeq" id="WP_010959463.1">
    <property type="nucleotide sequence ID" value="NC_002977.6"/>
</dbReference>
<dbReference type="SMR" id="Q60CL4"/>
<dbReference type="STRING" id="243233.MCA0092"/>
<dbReference type="GeneID" id="88222442"/>
<dbReference type="KEGG" id="mca:MCA0092"/>
<dbReference type="eggNOG" id="COG2933">
    <property type="taxonomic scope" value="Bacteria"/>
</dbReference>
<dbReference type="HOGENOM" id="CLU_043780_0_0_6"/>
<dbReference type="Proteomes" id="UP000006821">
    <property type="component" value="Chromosome"/>
</dbReference>
<dbReference type="GO" id="GO:0005737">
    <property type="term" value="C:cytoplasm"/>
    <property type="evidence" value="ECO:0007669"/>
    <property type="project" value="UniProtKB-SubCell"/>
</dbReference>
<dbReference type="GO" id="GO:0008757">
    <property type="term" value="F:S-adenosylmethionine-dependent methyltransferase activity"/>
    <property type="evidence" value="ECO:0007669"/>
    <property type="project" value="UniProtKB-UniRule"/>
</dbReference>
<dbReference type="GO" id="GO:0032259">
    <property type="term" value="P:methylation"/>
    <property type="evidence" value="ECO:0007669"/>
    <property type="project" value="UniProtKB-KW"/>
</dbReference>
<dbReference type="GO" id="GO:0006364">
    <property type="term" value="P:rRNA processing"/>
    <property type="evidence" value="ECO:0007669"/>
    <property type="project" value="UniProtKB-UniRule"/>
</dbReference>
<dbReference type="Gene3D" id="3.30.2300.20">
    <property type="match status" value="1"/>
</dbReference>
<dbReference type="Gene3D" id="3.30.70.2810">
    <property type="match status" value="1"/>
</dbReference>
<dbReference type="Gene3D" id="3.40.50.150">
    <property type="entry name" value="Vaccinia Virus protein VP39"/>
    <property type="match status" value="1"/>
</dbReference>
<dbReference type="HAMAP" id="MF_01551">
    <property type="entry name" value="23SrRNA_methyltr_M"/>
    <property type="match status" value="1"/>
</dbReference>
<dbReference type="InterPro" id="IPR040739">
    <property type="entry name" value="RlmM_FDX"/>
</dbReference>
<dbReference type="InterPro" id="IPR048646">
    <property type="entry name" value="RlmM_THUMP-like"/>
</dbReference>
<dbReference type="InterPro" id="IPR002877">
    <property type="entry name" value="RNA_MeTrfase_FtsJ_dom"/>
</dbReference>
<dbReference type="InterPro" id="IPR011224">
    <property type="entry name" value="rRNA_MeTrfase_M"/>
</dbReference>
<dbReference type="InterPro" id="IPR029063">
    <property type="entry name" value="SAM-dependent_MTases_sf"/>
</dbReference>
<dbReference type="NCBIfam" id="NF008734">
    <property type="entry name" value="PRK11760.1"/>
    <property type="match status" value="1"/>
</dbReference>
<dbReference type="PANTHER" id="PTHR37524">
    <property type="entry name" value="RIBOSOMAL RNA LARGE SUBUNIT METHYLTRANSFERASE M"/>
    <property type="match status" value="1"/>
</dbReference>
<dbReference type="PANTHER" id="PTHR37524:SF2">
    <property type="entry name" value="RIBOSOMAL RNA METHYLTRANSFERASE FTSJ DOMAIN-CONTAINING PROTEIN"/>
    <property type="match status" value="1"/>
</dbReference>
<dbReference type="Pfam" id="PF01728">
    <property type="entry name" value="FtsJ"/>
    <property type="match status" value="1"/>
</dbReference>
<dbReference type="Pfam" id="PF18125">
    <property type="entry name" value="RlmM_FDX"/>
    <property type="match status" value="1"/>
</dbReference>
<dbReference type="Pfam" id="PF21239">
    <property type="entry name" value="RLMM_N"/>
    <property type="match status" value="1"/>
</dbReference>
<dbReference type="PIRSF" id="PIRSF028774">
    <property type="entry name" value="UCP028774"/>
    <property type="match status" value="1"/>
</dbReference>
<dbReference type="SUPFAM" id="SSF53335">
    <property type="entry name" value="S-adenosyl-L-methionine-dependent methyltransferases"/>
    <property type="match status" value="1"/>
</dbReference>
<keyword id="KW-0963">Cytoplasm</keyword>
<keyword id="KW-0489">Methyltransferase</keyword>
<keyword id="KW-1185">Reference proteome</keyword>
<keyword id="KW-0698">rRNA processing</keyword>
<keyword id="KW-0949">S-adenosyl-L-methionine</keyword>
<keyword id="KW-0808">Transferase</keyword>
<proteinExistence type="inferred from homology"/>
<sequence>MTSPSSILLYCRRGFEKECAAEILVQTQAAGISGHVRAKENSAYVVFVAHEPEILANRAARLRFDALIFARQRIFASGPLADLPVDDRITPLLDTAAGLQRRYSTLWLETADTNEAKELAAFTRKFERPFAAAAAGLLGGGPQAPRLHVFFLTSTAAYLGYTLPDDSAPWPCGIPRLKLPRSAPSRSTLKLEEAFLVFVDRPETMLRPGMSAVDLGAAPGGWTWQLVRRHIRTTAVDNGNLDPALLDSGLVTHLRTDGFRFRPSRPVDWLVCDMVEQPSRIARLVADWAADGAFRYAVFNLKLPMNRRYEEVERCRGLIEERLAAQGVSHRLRFRQLYHDREEVTGFLELVS</sequence>
<accession>Q60CL4</accession>
<name>RLMM_METCA</name>
<protein>
    <recommendedName>
        <fullName evidence="1">Ribosomal RNA large subunit methyltransferase M</fullName>
        <ecNumber evidence="1">2.1.1.186</ecNumber>
    </recommendedName>
    <alternativeName>
        <fullName evidence="1">23S rRNA (cytidine2498-2'-O)-methyltransferase</fullName>
    </alternativeName>
    <alternativeName>
        <fullName evidence="1">23S rRNA 2'-O-ribose methyltransferase RlmM</fullName>
    </alternativeName>
</protein>
<organism>
    <name type="scientific">Methylococcus capsulatus (strain ATCC 33009 / NCIMB 11132 / Bath)</name>
    <dbReference type="NCBI Taxonomy" id="243233"/>
    <lineage>
        <taxon>Bacteria</taxon>
        <taxon>Pseudomonadati</taxon>
        <taxon>Pseudomonadota</taxon>
        <taxon>Gammaproteobacteria</taxon>
        <taxon>Methylococcales</taxon>
        <taxon>Methylococcaceae</taxon>
        <taxon>Methylococcus</taxon>
    </lineage>
</organism>
<gene>
    <name evidence="1" type="primary">rlmM</name>
    <name type="ordered locus">MCA0092</name>
</gene>
<evidence type="ECO:0000255" key="1">
    <source>
        <dbReference type="HAMAP-Rule" id="MF_01551"/>
    </source>
</evidence>
<feature type="chain" id="PRO_0000070410" description="Ribosomal RNA large subunit methyltransferase M">
    <location>
        <begin position="1"/>
        <end position="352"/>
    </location>
</feature>
<feature type="active site" description="Proton acceptor" evidence="1">
    <location>
        <position position="302"/>
    </location>
</feature>
<feature type="binding site" evidence="1">
    <location>
        <position position="187"/>
    </location>
    <ligand>
        <name>S-adenosyl-L-methionine</name>
        <dbReference type="ChEBI" id="CHEBI:59789"/>
    </ligand>
</feature>
<feature type="binding site" evidence="1">
    <location>
        <begin position="218"/>
        <end position="221"/>
    </location>
    <ligand>
        <name>S-adenosyl-L-methionine</name>
        <dbReference type="ChEBI" id="CHEBI:59789"/>
    </ligand>
</feature>
<feature type="binding site" evidence="1">
    <location>
        <position position="237"/>
    </location>
    <ligand>
        <name>S-adenosyl-L-methionine</name>
        <dbReference type="ChEBI" id="CHEBI:59789"/>
    </ligand>
</feature>
<feature type="binding site" evidence="1">
    <location>
        <position position="257"/>
    </location>
    <ligand>
        <name>S-adenosyl-L-methionine</name>
        <dbReference type="ChEBI" id="CHEBI:59789"/>
    </ligand>
</feature>
<feature type="binding site" evidence="1">
    <location>
        <position position="273"/>
    </location>
    <ligand>
        <name>S-adenosyl-L-methionine</name>
        <dbReference type="ChEBI" id="CHEBI:59789"/>
    </ligand>
</feature>
<comment type="function">
    <text evidence="1">Catalyzes the 2'-O-methylation at nucleotide C2498 in 23S rRNA.</text>
</comment>
<comment type="catalytic activity">
    <reaction evidence="1">
        <text>cytidine(2498) in 23S rRNA + S-adenosyl-L-methionine = 2'-O-methylcytidine(2498) in 23S rRNA + S-adenosyl-L-homocysteine + H(+)</text>
        <dbReference type="Rhea" id="RHEA:42788"/>
        <dbReference type="Rhea" id="RHEA-COMP:10244"/>
        <dbReference type="Rhea" id="RHEA-COMP:10245"/>
        <dbReference type="ChEBI" id="CHEBI:15378"/>
        <dbReference type="ChEBI" id="CHEBI:57856"/>
        <dbReference type="ChEBI" id="CHEBI:59789"/>
        <dbReference type="ChEBI" id="CHEBI:74495"/>
        <dbReference type="ChEBI" id="CHEBI:82748"/>
        <dbReference type="EC" id="2.1.1.186"/>
    </reaction>
</comment>
<comment type="subunit">
    <text evidence="1">Monomer.</text>
</comment>
<comment type="subcellular location">
    <subcellularLocation>
        <location evidence="1">Cytoplasm</location>
    </subcellularLocation>
</comment>
<comment type="similarity">
    <text evidence="1">Belongs to the class I-like SAM-binding methyltransferase superfamily. RNA methyltransferase RlmE family. RlmM subfamily.</text>
</comment>
<reference key="1">
    <citation type="journal article" date="2004" name="PLoS Biol.">
        <title>Genomic insights into methanotrophy: the complete genome sequence of Methylococcus capsulatus (Bath).</title>
        <authorList>
            <person name="Ward N.L."/>
            <person name="Larsen O."/>
            <person name="Sakwa J."/>
            <person name="Bruseth L."/>
            <person name="Khouri H.M."/>
            <person name="Durkin A.S."/>
            <person name="Dimitrov G."/>
            <person name="Jiang L."/>
            <person name="Scanlan D."/>
            <person name="Kang K.H."/>
            <person name="Lewis M.R."/>
            <person name="Nelson K.E."/>
            <person name="Methe B.A."/>
            <person name="Wu M."/>
            <person name="Heidelberg J.F."/>
            <person name="Paulsen I.T."/>
            <person name="Fouts D.E."/>
            <person name="Ravel J."/>
            <person name="Tettelin H."/>
            <person name="Ren Q."/>
            <person name="Read T.D."/>
            <person name="DeBoy R.T."/>
            <person name="Seshadri R."/>
            <person name="Salzberg S.L."/>
            <person name="Jensen H.B."/>
            <person name="Birkeland N.K."/>
            <person name="Nelson W.C."/>
            <person name="Dodson R.J."/>
            <person name="Grindhaug S.H."/>
            <person name="Holt I.E."/>
            <person name="Eidhammer I."/>
            <person name="Jonasen I."/>
            <person name="Vanaken S."/>
            <person name="Utterback T.R."/>
            <person name="Feldblyum T.V."/>
            <person name="Fraser C.M."/>
            <person name="Lillehaug J.R."/>
            <person name="Eisen J.A."/>
        </authorList>
    </citation>
    <scope>NUCLEOTIDE SEQUENCE [LARGE SCALE GENOMIC DNA]</scope>
    <source>
        <strain>ATCC 33009 / NCIMB 11132 / Bath</strain>
    </source>
</reference>